<comment type="function">
    <text evidence="1">Part of the ecpRABCDE operon, which encodes the E.coli common pilus (ECP). ECP is found in both commensal and pathogenic strains and plays a dual role in early-stage biofilm development and host cell recognition. Positively regulates the expression of the ecp operon (By similarity).</text>
</comment>
<comment type="subcellular location">
    <subcellularLocation>
        <location evidence="3">Cytoplasm</location>
    </subcellularLocation>
</comment>
<comment type="induction">
    <text evidence="1">Negatively regulated by H-NS. Positively autoregulated. Also positively regulated by IHF (By similarity).</text>
</comment>
<comment type="similarity">
    <text evidence="3">Belongs to the EcpR/MatA family.</text>
</comment>
<comment type="sequence caution" evidence="3">
    <conflict type="erroneous initiation">
        <sequence resource="EMBL-CDS" id="ACI37217"/>
    </conflict>
</comment>
<name>ECPR_ECO5E</name>
<evidence type="ECO:0000250" key="1"/>
<evidence type="ECO:0000255" key="2">
    <source>
        <dbReference type="PROSITE-ProRule" id="PRU00411"/>
    </source>
</evidence>
<evidence type="ECO:0000305" key="3"/>
<accession>B5Z1N3</accession>
<gene>
    <name type="primary">ecpR</name>
    <name type="synonym">matA</name>
    <name type="ordered locus">ECH74115_0340</name>
</gene>
<protein>
    <recommendedName>
        <fullName>HTH-type transcriptional regulator EcpR</fullName>
    </recommendedName>
</protein>
<feature type="chain" id="PRO_0000369180" description="HTH-type transcriptional regulator EcpR">
    <location>
        <begin position="1"/>
        <end position="196"/>
    </location>
</feature>
<feature type="domain" description="HTH luxR-type" evidence="2">
    <location>
        <begin position="138"/>
        <end position="196"/>
    </location>
</feature>
<feature type="DNA-binding region" description="H-T-H motif" evidence="2">
    <location>
        <begin position="162"/>
        <end position="181"/>
    </location>
</feature>
<keyword id="KW-0010">Activator</keyword>
<keyword id="KW-0963">Cytoplasm</keyword>
<keyword id="KW-0238">DNA-binding</keyword>
<keyword id="KW-0804">Transcription</keyword>
<keyword id="KW-0805">Transcription regulation</keyword>
<dbReference type="EMBL" id="CP001164">
    <property type="protein sequence ID" value="ACI37217.1"/>
    <property type="status" value="ALT_INIT"/>
    <property type="molecule type" value="Genomic_DNA"/>
</dbReference>
<dbReference type="SMR" id="B5Z1N3"/>
<dbReference type="KEGG" id="ecf:ECH74115_0340"/>
<dbReference type="HOGENOM" id="CLU_128111_0_0_6"/>
<dbReference type="GO" id="GO:0005737">
    <property type="term" value="C:cytoplasm"/>
    <property type="evidence" value="ECO:0007669"/>
    <property type="project" value="UniProtKB-SubCell"/>
</dbReference>
<dbReference type="GO" id="GO:0003677">
    <property type="term" value="F:DNA binding"/>
    <property type="evidence" value="ECO:0007669"/>
    <property type="project" value="UniProtKB-KW"/>
</dbReference>
<dbReference type="GO" id="GO:0006355">
    <property type="term" value="P:regulation of DNA-templated transcription"/>
    <property type="evidence" value="ECO:0007669"/>
    <property type="project" value="InterPro"/>
</dbReference>
<dbReference type="CDD" id="cd06170">
    <property type="entry name" value="LuxR_C_like"/>
    <property type="match status" value="1"/>
</dbReference>
<dbReference type="Gene3D" id="1.10.10.10">
    <property type="entry name" value="Winged helix-like DNA-binding domain superfamily/Winged helix DNA-binding domain"/>
    <property type="match status" value="1"/>
</dbReference>
<dbReference type="InterPro" id="IPR016032">
    <property type="entry name" value="Sig_transdc_resp-reg_C-effctor"/>
</dbReference>
<dbReference type="InterPro" id="IPR000792">
    <property type="entry name" value="Tscrpt_reg_LuxR_C"/>
</dbReference>
<dbReference type="InterPro" id="IPR036388">
    <property type="entry name" value="WH-like_DNA-bd_sf"/>
</dbReference>
<dbReference type="Pfam" id="PF00196">
    <property type="entry name" value="GerE"/>
    <property type="match status" value="1"/>
</dbReference>
<dbReference type="PRINTS" id="PR00038">
    <property type="entry name" value="HTHLUXR"/>
</dbReference>
<dbReference type="SMART" id="SM00421">
    <property type="entry name" value="HTH_LUXR"/>
    <property type="match status" value="1"/>
</dbReference>
<dbReference type="SUPFAM" id="SSF46894">
    <property type="entry name" value="C-terminal effector domain of the bipartite response regulators"/>
    <property type="match status" value="1"/>
</dbReference>
<dbReference type="PROSITE" id="PS50043">
    <property type="entry name" value="HTH_LUXR_2"/>
    <property type="match status" value="1"/>
</dbReference>
<proteinExistence type="inferred from homology"/>
<sequence length="196" mass="23300">MTWQNDYSRDYEVENHMECQNRSDKYIWSPHDAYFYKGLSELIVDIDRLIYLSLEKIRKDFVFINLNTDSLTEFINRDNEWLSAVKGKQVVLIAARKSEALANYWYYNSNIRGVVYAGLSRDIRKELAYVINGRFLRKDIKKDKITDREMEIIRMTAQGMLPKSIARIENCSVKTVYTHRRNAEAKLYSKLYKLVQ</sequence>
<organism>
    <name type="scientific">Escherichia coli O157:H7 (strain EC4115 / EHEC)</name>
    <dbReference type="NCBI Taxonomy" id="444450"/>
    <lineage>
        <taxon>Bacteria</taxon>
        <taxon>Pseudomonadati</taxon>
        <taxon>Pseudomonadota</taxon>
        <taxon>Gammaproteobacteria</taxon>
        <taxon>Enterobacterales</taxon>
        <taxon>Enterobacteriaceae</taxon>
        <taxon>Escherichia</taxon>
    </lineage>
</organism>
<reference key="1">
    <citation type="journal article" date="2011" name="Proc. Natl. Acad. Sci. U.S.A.">
        <title>Genomic anatomy of Escherichia coli O157:H7 outbreaks.</title>
        <authorList>
            <person name="Eppinger M."/>
            <person name="Mammel M.K."/>
            <person name="Leclerc J.E."/>
            <person name="Ravel J."/>
            <person name="Cebula T.A."/>
        </authorList>
    </citation>
    <scope>NUCLEOTIDE SEQUENCE [LARGE SCALE GENOMIC DNA]</scope>
    <source>
        <strain>EC4115 / EHEC</strain>
    </source>
</reference>